<organism>
    <name type="scientific">Staphylococcus carnosus (strain TM300)</name>
    <dbReference type="NCBI Taxonomy" id="396513"/>
    <lineage>
        <taxon>Bacteria</taxon>
        <taxon>Bacillati</taxon>
        <taxon>Bacillota</taxon>
        <taxon>Bacilli</taxon>
        <taxon>Bacillales</taxon>
        <taxon>Staphylococcaceae</taxon>
        <taxon>Staphylococcus</taxon>
    </lineage>
</organism>
<keyword id="KW-0665">Pyrimidine biosynthesis</keyword>
<keyword id="KW-1185">Reference proteome</keyword>
<keyword id="KW-0808">Transferase</keyword>
<reference key="1">
    <citation type="journal article" date="2009" name="Appl. Environ. Microbiol.">
        <title>Genome analysis of the meat starter culture bacterium Staphylococcus carnosus TM300.</title>
        <authorList>
            <person name="Rosenstein R."/>
            <person name="Nerz C."/>
            <person name="Biswas L."/>
            <person name="Resch A."/>
            <person name="Raddatz G."/>
            <person name="Schuster S.C."/>
            <person name="Goetz F."/>
        </authorList>
    </citation>
    <scope>NUCLEOTIDE SEQUENCE [LARGE SCALE GENOMIC DNA]</scope>
    <source>
        <strain>TM300</strain>
    </source>
</reference>
<name>PYRB_STACT</name>
<feature type="chain" id="PRO_1000116157" description="Aspartate carbamoyltransferase catalytic subunit">
    <location>
        <begin position="1"/>
        <end position="302"/>
    </location>
</feature>
<feature type="binding site" evidence="1">
    <location>
        <position position="49"/>
    </location>
    <ligand>
        <name>carbamoyl phosphate</name>
        <dbReference type="ChEBI" id="CHEBI:58228"/>
    </ligand>
</feature>
<feature type="binding site" evidence="1">
    <location>
        <position position="50"/>
    </location>
    <ligand>
        <name>carbamoyl phosphate</name>
        <dbReference type="ChEBI" id="CHEBI:58228"/>
    </ligand>
</feature>
<feature type="binding site" evidence="1">
    <location>
        <position position="77"/>
    </location>
    <ligand>
        <name>L-aspartate</name>
        <dbReference type="ChEBI" id="CHEBI:29991"/>
    </ligand>
</feature>
<feature type="binding site" evidence="1">
    <location>
        <position position="99"/>
    </location>
    <ligand>
        <name>carbamoyl phosphate</name>
        <dbReference type="ChEBI" id="CHEBI:58228"/>
    </ligand>
</feature>
<feature type="binding site" evidence="1">
    <location>
        <position position="126"/>
    </location>
    <ligand>
        <name>carbamoyl phosphate</name>
        <dbReference type="ChEBI" id="CHEBI:58228"/>
    </ligand>
</feature>
<feature type="binding site" evidence="1">
    <location>
        <position position="129"/>
    </location>
    <ligand>
        <name>carbamoyl phosphate</name>
        <dbReference type="ChEBI" id="CHEBI:58228"/>
    </ligand>
</feature>
<feature type="binding site" evidence="1">
    <location>
        <position position="159"/>
    </location>
    <ligand>
        <name>L-aspartate</name>
        <dbReference type="ChEBI" id="CHEBI:29991"/>
    </ligand>
</feature>
<feature type="binding site" evidence="1">
    <location>
        <position position="209"/>
    </location>
    <ligand>
        <name>L-aspartate</name>
        <dbReference type="ChEBI" id="CHEBI:29991"/>
    </ligand>
</feature>
<feature type="binding site" evidence="1">
    <location>
        <position position="250"/>
    </location>
    <ligand>
        <name>carbamoyl phosphate</name>
        <dbReference type="ChEBI" id="CHEBI:58228"/>
    </ligand>
</feature>
<feature type="binding site" evidence="1">
    <location>
        <position position="251"/>
    </location>
    <ligand>
        <name>carbamoyl phosphate</name>
        <dbReference type="ChEBI" id="CHEBI:58228"/>
    </ligand>
</feature>
<dbReference type="EC" id="2.1.3.2" evidence="1"/>
<dbReference type="EMBL" id="AM295250">
    <property type="protein sequence ID" value="CAL27724.1"/>
    <property type="molecule type" value="Genomic_DNA"/>
</dbReference>
<dbReference type="RefSeq" id="WP_015900066.1">
    <property type="nucleotide sequence ID" value="NC_012121.1"/>
</dbReference>
<dbReference type="SMR" id="B9DPM9"/>
<dbReference type="GeneID" id="93795749"/>
<dbReference type="KEGG" id="sca:SCA_0814"/>
<dbReference type="eggNOG" id="COG0540">
    <property type="taxonomic scope" value="Bacteria"/>
</dbReference>
<dbReference type="HOGENOM" id="CLU_043846_2_1_9"/>
<dbReference type="OrthoDB" id="9774690at2"/>
<dbReference type="BioCyc" id="SCAR396513:SCA_RS04120-MONOMER"/>
<dbReference type="UniPathway" id="UPA00070">
    <property type="reaction ID" value="UER00116"/>
</dbReference>
<dbReference type="Proteomes" id="UP000000444">
    <property type="component" value="Chromosome"/>
</dbReference>
<dbReference type="GO" id="GO:0005829">
    <property type="term" value="C:cytosol"/>
    <property type="evidence" value="ECO:0007669"/>
    <property type="project" value="TreeGrafter"/>
</dbReference>
<dbReference type="GO" id="GO:0016597">
    <property type="term" value="F:amino acid binding"/>
    <property type="evidence" value="ECO:0007669"/>
    <property type="project" value="InterPro"/>
</dbReference>
<dbReference type="GO" id="GO:0004070">
    <property type="term" value="F:aspartate carbamoyltransferase activity"/>
    <property type="evidence" value="ECO:0007669"/>
    <property type="project" value="UniProtKB-UniRule"/>
</dbReference>
<dbReference type="GO" id="GO:0006207">
    <property type="term" value="P:'de novo' pyrimidine nucleobase biosynthetic process"/>
    <property type="evidence" value="ECO:0007669"/>
    <property type="project" value="InterPro"/>
</dbReference>
<dbReference type="GO" id="GO:0044205">
    <property type="term" value="P:'de novo' UMP biosynthetic process"/>
    <property type="evidence" value="ECO:0007669"/>
    <property type="project" value="UniProtKB-UniRule"/>
</dbReference>
<dbReference type="GO" id="GO:0006520">
    <property type="term" value="P:amino acid metabolic process"/>
    <property type="evidence" value="ECO:0007669"/>
    <property type="project" value="InterPro"/>
</dbReference>
<dbReference type="FunFam" id="3.40.50.1370:FF:000011">
    <property type="entry name" value="Aspartate carbamoyltransferase"/>
    <property type="match status" value="1"/>
</dbReference>
<dbReference type="Gene3D" id="3.40.50.1370">
    <property type="entry name" value="Aspartate/ornithine carbamoyltransferase"/>
    <property type="match status" value="2"/>
</dbReference>
<dbReference type="HAMAP" id="MF_00001">
    <property type="entry name" value="Asp_carb_tr"/>
    <property type="match status" value="1"/>
</dbReference>
<dbReference type="InterPro" id="IPR006132">
    <property type="entry name" value="Asp/Orn_carbamoyltranf_P-bd"/>
</dbReference>
<dbReference type="InterPro" id="IPR006130">
    <property type="entry name" value="Asp/Orn_carbamoylTrfase"/>
</dbReference>
<dbReference type="InterPro" id="IPR036901">
    <property type="entry name" value="Asp/Orn_carbamoylTrfase_sf"/>
</dbReference>
<dbReference type="InterPro" id="IPR002082">
    <property type="entry name" value="Asp_carbamoyltransf"/>
</dbReference>
<dbReference type="InterPro" id="IPR006131">
    <property type="entry name" value="Asp_carbamoyltransf_Asp/Orn-bd"/>
</dbReference>
<dbReference type="NCBIfam" id="TIGR00670">
    <property type="entry name" value="asp_carb_tr"/>
    <property type="match status" value="1"/>
</dbReference>
<dbReference type="NCBIfam" id="NF002032">
    <property type="entry name" value="PRK00856.1"/>
    <property type="match status" value="1"/>
</dbReference>
<dbReference type="PANTHER" id="PTHR45753:SF6">
    <property type="entry name" value="ASPARTATE CARBAMOYLTRANSFERASE"/>
    <property type="match status" value="1"/>
</dbReference>
<dbReference type="PANTHER" id="PTHR45753">
    <property type="entry name" value="ORNITHINE CARBAMOYLTRANSFERASE, MITOCHONDRIAL"/>
    <property type="match status" value="1"/>
</dbReference>
<dbReference type="Pfam" id="PF00185">
    <property type="entry name" value="OTCace"/>
    <property type="match status" value="1"/>
</dbReference>
<dbReference type="Pfam" id="PF02729">
    <property type="entry name" value="OTCace_N"/>
    <property type="match status" value="1"/>
</dbReference>
<dbReference type="PRINTS" id="PR00100">
    <property type="entry name" value="AOTCASE"/>
</dbReference>
<dbReference type="PRINTS" id="PR00101">
    <property type="entry name" value="ATCASE"/>
</dbReference>
<dbReference type="SUPFAM" id="SSF53671">
    <property type="entry name" value="Aspartate/ornithine carbamoyltransferase"/>
    <property type="match status" value="1"/>
</dbReference>
<dbReference type="PROSITE" id="PS00097">
    <property type="entry name" value="CARBAMOYLTRANSFERASE"/>
    <property type="match status" value="1"/>
</dbReference>
<protein>
    <recommendedName>
        <fullName evidence="1">Aspartate carbamoyltransferase catalytic subunit</fullName>
        <ecNumber evidence="1">2.1.3.2</ecNumber>
    </recommendedName>
    <alternativeName>
        <fullName evidence="1">Aspartate transcarbamylase</fullName>
        <shortName evidence="1">ATCase</shortName>
    </alternativeName>
</protein>
<proteinExistence type="inferred from homology"/>
<sequence>MKQLVSMEDLTNEEIYSLIETAIEYKKGNKPNKFTDKYVSNLFFENSTRTKCSFEMAERQLGLQEIPFETSTSSVKKGESLYDTCKTLESIGVDALVIRHPQNDYYKELEGLNIPVINGGDGSGQHPTQSLLDIMTIYEEYKDFKDLNVLICGDIKNSRVARSNYQALTALGANVKFAAPGEWVDESLDAPYVKIDDVIEETDIVMLLRVQHERHDGELSFDPHEYHEKYGLTKDRYNRMKSEAIVMHPAPVNRGVEIDSDLVEAPKARIFKQMKNGMFLRMSVITHILAEKEEGVIFDVAN</sequence>
<comment type="function">
    <text evidence="1">Catalyzes the condensation of carbamoyl phosphate and aspartate to form carbamoyl aspartate and inorganic phosphate, the committed step in the de novo pyrimidine nucleotide biosynthesis pathway.</text>
</comment>
<comment type="catalytic activity">
    <reaction evidence="1">
        <text>carbamoyl phosphate + L-aspartate = N-carbamoyl-L-aspartate + phosphate + H(+)</text>
        <dbReference type="Rhea" id="RHEA:20013"/>
        <dbReference type="ChEBI" id="CHEBI:15378"/>
        <dbReference type="ChEBI" id="CHEBI:29991"/>
        <dbReference type="ChEBI" id="CHEBI:32814"/>
        <dbReference type="ChEBI" id="CHEBI:43474"/>
        <dbReference type="ChEBI" id="CHEBI:58228"/>
        <dbReference type="EC" id="2.1.3.2"/>
    </reaction>
</comment>
<comment type="pathway">
    <text evidence="1">Pyrimidine metabolism; UMP biosynthesis via de novo pathway; (S)-dihydroorotate from bicarbonate: step 2/3.</text>
</comment>
<comment type="subunit">
    <text evidence="1">Heterododecamer (2C3:3R2) of six catalytic PyrB chains organized as two trimers (C3), and six regulatory PyrI chains organized as three dimers (R2).</text>
</comment>
<comment type="similarity">
    <text evidence="1">Belongs to the aspartate/ornithine carbamoyltransferase superfamily. ATCase family.</text>
</comment>
<evidence type="ECO:0000255" key="1">
    <source>
        <dbReference type="HAMAP-Rule" id="MF_00001"/>
    </source>
</evidence>
<accession>B9DPM9</accession>
<gene>
    <name evidence="1" type="primary">pyrB</name>
    <name type="ordered locus">Sca_0814</name>
</gene>